<protein>
    <recommendedName>
        <fullName evidence="1">Elongation factor 4</fullName>
        <shortName evidence="1">EF-4</shortName>
        <ecNumber evidence="1">3.6.5.n1</ecNumber>
    </recommendedName>
    <alternativeName>
        <fullName evidence="1">Ribosomal back-translocase LepA</fullName>
    </alternativeName>
</protein>
<name>LEPA_FRATF</name>
<comment type="function">
    <text evidence="1">Required for accurate and efficient protein synthesis under certain stress conditions. May act as a fidelity factor of the translation reaction, by catalyzing a one-codon backward translocation of tRNAs on improperly translocated ribosomes. Back-translocation proceeds from a post-translocation (POST) complex to a pre-translocation (PRE) complex, thus giving elongation factor G a second chance to translocate the tRNAs correctly. Binds to ribosomes in a GTP-dependent manner.</text>
</comment>
<comment type="catalytic activity">
    <reaction evidence="1">
        <text>GTP + H2O = GDP + phosphate + H(+)</text>
        <dbReference type="Rhea" id="RHEA:19669"/>
        <dbReference type="ChEBI" id="CHEBI:15377"/>
        <dbReference type="ChEBI" id="CHEBI:15378"/>
        <dbReference type="ChEBI" id="CHEBI:37565"/>
        <dbReference type="ChEBI" id="CHEBI:43474"/>
        <dbReference type="ChEBI" id="CHEBI:58189"/>
        <dbReference type="EC" id="3.6.5.n1"/>
    </reaction>
</comment>
<comment type="subcellular location">
    <subcellularLocation>
        <location evidence="1">Cell inner membrane</location>
        <topology evidence="1">Peripheral membrane protein</topology>
        <orientation evidence="1">Cytoplasmic side</orientation>
    </subcellularLocation>
</comment>
<comment type="similarity">
    <text evidence="1">Belongs to the TRAFAC class translation factor GTPase superfamily. Classic translation factor GTPase family. LepA subfamily.</text>
</comment>
<keyword id="KW-0997">Cell inner membrane</keyword>
<keyword id="KW-1003">Cell membrane</keyword>
<keyword id="KW-0342">GTP-binding</keyword>
<keyword id="KW-0378">Hydrolase</keyword>
<keyword id="KW-0472">Membrane</keyword>
<keyword id="KW-0547">Nucleotide-binding</keyword>
<keyword id="KW-0648">Protein biosynthesis</keyword>
<feature type="chain" id="PRO_1000031997" description="Elongation factor 4">
    <location>
        <begin position="1"/>
        <end position="594"/>
    </location>
</feature>
<feature type="domain" description="tr-type G">
    <location>
        <begin position="2"/>
        <end position="184"/>
    </location>
</feature>
<feature type="binding site" evidence="1">
    <location>
        <begin position="14"/>
        <end position="19"/>
    </location>
    <ligand>
        <name>GTP</name>
        <dbReference type="ChEBI" id="CHEBI:37565"/>
    </ligand>
</feature>
<feature type="binding site" evidence="1">
    <location>
        <begin position="131"/>
        <end position="134"/>
    </location>
    <ligand>
        <name>GTP</name>
        <dbReference type="ChEBI" id="CHEBI:37565"/>
    </ligand>
</feature>
<dbReference type="EC" id="3.6.5.n1" evidence="1"/>
<dbReference type="EMBL" id="CP000803">
    <property type="protein sequence ID" value="ABU60557.1"/>
    <property type="molecule type" value="Genomic_DNA"/>
</dbReference>
<dbReference type="RefSeq" id="WP_003014022.1">
    <property type="nucleotide sequence ID" value="NC_009749.1"/>
</dbReference>
<dbReference type="SMR" id="A7N9A4"/>
<dbReference type="KEGG" id="fta:FTA_0079"/>
<dbReference type="HOGENOM" id="CLU_009995_3_3_6"/>
<dbReference type="GO" id="GO:0005886">
    <property type="term" value="C:plasma membrane"/>
    <property type="evidence" value="ECO:0007669"/>
    <property type="project" value="UniProtKB-SubCell"/>
</dbReference>
<dbReference type="GO" id="GO:0005525">
    <property type="term" value="F:GTP binding"/>
    <property type="evidence" value="ECO:0007669"/>
    <property type="project" value="UniProtKB-UniRule"/>
</dbReference>
<dbReference type="GO" id="GO:0003924">
    <property type="term" value="F:GTPase activity"/>
    <property type="evidence" value="ECO:0007669"/>
    <property type="project" value="UniProtKB-UniRule"/>
</dbReference>
<dbReference type="GO" id="GO:0097216">
    <property type="term" value="F:guanosine tetraphosphate binding"/>
    <property type="evidence" value="ECO:0007669"/>
    <property type="project" value="UniProtKB-ARBA"/>
</dbReference>
<dbReference type="GO" id="GO:0043022">
    <property type="term" value="F:ribosome binding"/>
    <property type="evidence" value="ECO:0007669"/>
    <property type="project" value="UniProtKB-UniRule"/>
</dbReference>
<dbReference type="GO" id="GO:0003746">
    <property type="term" value="F:translation elongation factor activity"/>
    <property type="evidence" value="ECO:0007669"/>
    <property type="project" value="UniProtKB-UniRule"/>
</dbReference>
<dbReference type="GO" id="GO:0045727">
    <property type="term" value="P:positive regulation of translation"/>
    <property type="evidence" value="ECO:0007669"/>
    <property type="project" value="UniProtKB-UniRule"/>
</dbReference>
<dbReference type="CDD" id="cd03699">
    <property type="entry name" value="EF4_II"/>
    <property type="match status" value="1"/>
</dbReference>
<dbReference type="CDD" id="cd16260">
    <property type="entry name" value="EF4_III"/>
    <property type="match status" value="1"/>
</dbReference>
<dbReference type="CDD" id="cd01890">
    <property type="entry name" value="LepA"/>
    <property type="match status" value="1"/>
</dbReference>
<dbReference type="CDD" id="cd03709">
    <property type="entry name" value="lepA_C"/>
    <property type="match status" value="1"/>
</dbReference>
<dbReference type="FunFam" id="3.40.50.300:FF:000078">
    <property type="entry name" value="Elongation factor 4"/>
    <property type="match status" value="1"/>
</dbReference>
<dbReference type="FunFam" id="2.40.30.10:FF:000015">
    <property type="entry name" value="Translation factor GUF1, mitochondrial"/>
    <property type="match status" value="1"/>
</dbReference>
<dbReference type="FunFam" id="3.30.70.240:FF:000007">
    <property type="entry name" value="Translation factor GUF1, mitochondrial"/>
    <property type="match status" value="1"/>
</dbReference>
<dbReference type="FunFam" id="3.30.70.2570:FF:000001">
    <property type="entry name" value="Translation factor GUF1, mitochondrial"/>
    <property type="match status" value="1"/>
</dbReference>
<dbReference type="FunFam" id="3.30.70.870:FF:000004">
    <property type="entry name" value="Translation factor GUF1, mitochondrial"/>
    <property type="match status" value="1"/>
</dbReference>
<dbReference type="Gene3D" id="3.30.70.240">
    <property type="match status" value="1"/>
</dbReference>
<dbReference type="Gene3D" id="3.30.70.2570">
    <property type="entry name" value="Elongation factor 4, C-terminal domain"/>
    <property type="match status" value="1"/>
</dbReference>
<dbReference type="Gene3D" id="3.30.70.870">
    <property type="entry name" value="Elongation Factor G (Translational Gtpase), domain 3"/>
    <property type="match status" value="1"/>
</dbReference>
<dbReference type="Gene3D" id="3.40.50.300">
    <property type="entry name" value="P-loop containing nucleotide triphosphate hydrolases"/>
    <property type="match status" value="1"/>
</dbReference>
<dbReference type="Gene3D" id="2.40.30.10">
    <property type="entry name" value="Translation factors"/>
    <property type="match status" value="1"/>
</dbReference>
<dbReference type="HAMAP" id="MF_00071">
    <property type="entry name" value="LepA"/>
    <property type="match status" value="1"/>
</dbReference>
<dbReference type="InterPro" id="IPR006297">
    <property type="entry name" value="EF-4"/>
</dbReference>
<dbReference type="InterPro" id="IPR035647">
    <property type="entry name" value="EFG_III/V"/>
</dbReference>
<dbReference type="InterPro" id="IPR000640">
    <property type="entry name" value="EFG_V-like"/>
</dbReference>
<dbReference type="InterPro" id="IPR004161">
    <property type="entry name" value="EFTu-like_2"/>
</dbReference>
<dbReference type="InterPro" id="IPR031157">
    <property type="entry name" value="G_TR_CS"/>
</dbReference>
<dbReference type="InterPro" id="IPR038363">
    <property type="entry name" value="LepA_C_sf"/>
</dbReference>
<dbReference type="InterPro" id="IPR013842">
    <property type="entry name" value="LepA_CTD"/>
</dbReference>
<dbReference type="InterPro" id="IPR035654">
    <property type="entry name" value="LepA_IV"/>
</dbReference>
<dbReference type="InterPro" id="IPR027417">
    <property type="entry name" value="P-loop_NTPase"/>
</dbReference>
<dbReference type="InterPro" id="IPR005225">
    <property type="entry name" value="Small_GTP-bd"/>
</dbReference>
<dbReference type="InterPro" id="IPR000795">
    <property type="entry name" value="T_Tr_GTP-bd_dom"/>
</dbReference>
<dbReference type="NCBIfam" id="TIGR01393">
    <property type="entry name" value="lepA"/>
    <property type="match status" value="1"/>
</dbReference>
<dbReference type="NCBIfam" id="TIGR00231">
    <property type="entry name" value="small_GTP"/>
    <property type="match status" value="1"/>
</dbReference>
<dbReference type="PANTHER" id="PTHR43512:SF4">
    <property type="entry name" value="TRANSLATION FACTOR GUF1 HOMOLOG, CHLOROPLASTIC"/>
    <property type="match status" value="1"/>
</dbReference>
<dbReference type="PANTHER" id="PTHR43512">
    <property type="entry name" value="TRANSLATION FACTOR GUF1-RELATED"/>
    <property type="match status" value="1"/>
</dbReference>
<dbReference type="Pfam" id="PF00679">
    <property type="entry name" value="EFG_C"/>
    <property type="match status" value="1"/>
</dbReference>
<dbReference type="Pfam" id="PF00009">
    <property type="entry name" value="GTP_EFTU"/>
    <property type="match status" value="1"/>
</dbReference>
<dbReference type="Pfam" id="PF03144">
    <property type="entry name" value="GTP_EFTU_D2"/>
    <property type="match status" value="1"/>
</dbReference>
<dbReference type="Pfam" id="PF06421">
    <property type="entry name" value="LepA_C"/>
    <property type="match status" value="1"/>
</dbReference>
<dbReference type="PRINTS" id="PR00315">
    <property type="entry name" value="ELONGATNFCT"/>
</dbReference>
<dbReference type="SUPFAM" id="SSF54980">
    <property type="entry name" value="EF-G C-terminal domain-like"/>
    <property type="match status" value="2"/>
</dbReference>
<dbReference type="SUPFAM" id="SSF52540">
    <property type="entry name" value="P-loop containing nucleoside triphosphate hydrolases"/>
    <property type="match status" value="1"/>
</dbReference>
<dbReference type="PROSITE" id="PS00301">
    <property type="entry name" value="G_TR_1"/>
    <property type="match status" value="1"/>
</dbReference>
<dbReference type="PROSITE" id="PS51722">
    <property type="entry name" value="G_TR_2"/>
    <property type="match status" value="1"/>
</dbReference>
<sequence>MKNIRNFSIIAHIDHGKSTLSDRFIQVCNGLSEREMKEQVLDSMDIERERGITIKAQSVTLDYTARDGQTYQLNFIDTPGHVDFSYEVSRSLAACEGALLVVDAAQGVEAQTVANCYTAIEQNLEVIPILNKIDLPFAEPDRVAQEIEEIIGIDATGATTCSAKIGIGVEDVLETIVAKVPAPEGDVNAKLQALIIDSWFDNYLGVVSLVRVKNGTIKKGEKFKVMSTGVAYQVDRLGVFTPKMKDLDHLKAGEVGFIVAGIKDIHGAPVGDTLTHAHNPTDKPVPGFKKVQPQVYAGMFTISSDDYPDFREALEKLSLNDASLFFEPEVSQALGFGFRCGFLGMLHMEIIQERLEREYNLDLITSAPTVVYKAIKKDGEIIEVDNLSKLPEPGAIAEIQEPIVRANILVPKDYVGSVITICIEKRGVQVDLNYVGNQVSITYDLPMIEVVSDFFDTLKSVTKGYGSLDYELIRYEPANMVCLDVLINGDKVDALASIVHKDQAKYKGRELVERLKELIPRQMFEVAIQAAIGGTIVARSTVKALRKNVLAKCYGGDVSRKKKLLEKQKEGKKRMKNIGSVEIPQEAFLSVLKK</sequence>
<gene>
    <name evidence="1" type="primary">lepA</name>
    <name type="ordered locus">FTA_0079</name>
</gene>
<accession>A7N9A4</accession>
<reference key="1">
    <citation type="journal article" date="2009" name="PLoS ONE">
        <title>Complete genome sequence of Francisella tularensis subspecies holarctica FTNF002-00.</title>
        <authorList>
            <person name="Barabote R.D."/>
            <person name="Xie G."/>
            <person name="Brettin T.S."/>
            <person name="Hinrichs S.H."/>
            <person name="Fey P.D."/>
            <person name="Jay J.J."/>
            <person name="Engle J.L."/>
            <person name="Godbole S.D."/>
            <person name="Noronha J.M."/>
            <person name="Scheuermann R.H."/>
            <person name="Zhou L.W."/>
            <person name="Lion C."/>
            <person name="Dempsey M.P."/>
        </authorList>
    </citation>
    <scope>NUCLEOTIDE SEQUENCE [LARGE SCALE GENOMIC DNA]</scope>
    <source>
        <strain>FTNF002-00 / FTA</strain>
    </source>
</reference>
<proteinExistence type="inferred from homology"/>
<organism>
    <name type="scientific">Francisella tularensis subsp. holarctica (strain FTNF002-00 / FTA)</name>
    <dbReference type="NCBI Taxonomy" id="458234"/>
    <lineage>
        <taxon>Bacteria</taxon>
        <taxon>Pseudomonadati</taxon>
        <taxon>Pseudomonadota</taxon>
        <taxon>Gammaproteobacteria</taxon>
        <taxon>Thiotrichales</taxon>
        <taxon>Francisellaceae</taxon>
        <taxon>Francisella</taxon>
    </lineage>
</organism>
<evidence type="ECO:0000255" key="1">
    <source>
        <dbReference type="HAMAP-Rule" id="MF_00071"/>
    </source>
</evidence>